<evidence type="ECO:0000255" key="1">
    <source>
        <dbReference type="HAMAP-Rule" id="MF_01107"/>
    </source>
</evidence>
<evidence type="ECO:0000305" key="2"/>
<gene>
    <name evidence="1" type="primary">argD</name>
    <name type="ordered locus">SE_1209</name>
</gene>
<comment type="catalytic activity">
    <reaction evidence="1">
        <text>N(2)-acetyl-L-ornithine + 2-oxoglutarate = N-acetyl-L-glutamate 5-semialdehyde + L-glutamate</text>
        <dbReference type="Rhea" id="RHEA:18049"/>
        <dbReference type="ChEBI" id="CHEBI:16810"/>
        <dbReference type="ChEBI" id="CHEBI:29123"/>
        <dbReference type="ChEBI" id="CHEBI:29985"/>
        <dbReference type="ChEBI" id="CHEBI:57805"/>
        <dbReference type="EC" id="2.6.1.11"/>
    </reaction>
</comment>
<comment type="cofactor">
    <cofactor evidence="1">
        <name>pyridoxal 5'-phosphate</name>
        <dbReference type="ChEBI" id="CHEBI:597326"/>
    </cofactor>
    <text evidence="1">Binds 1 pyridoxal phosphate per subunit.</text>
</comment>
<comment type="pathway">
    <text evidence="1">Amino-acid biosynthesis; L-arginine biosynthesis; N(2)-acetyl-L-ornithine from L-glutamate: step 4/4.</text>
</comment>
<comment type="subunit">
    <text evidence="1">Homodimer.</text>
</comment>
<comment type="subcellular location">
    <subcellularLocation>
        <location evidence="1">Cytoplasm</location>
    </subcellularLocation>
</comment>
<comment type="miscellaneous">
    <text evidence="1">May also have succinyldiaminopimelate aminotransferase activity, thus carrying out the corresponding step in lysine biosynthesis.</text>
</comment>
<comment type="similarity">
    <text evidence="1">Belongs to the class-III pyridoxal-phosphate-dependent aminotransferase family. ArgD subfamily.</text>
</comment>
<comment type="sequence caution" evidence="2">
    <conflict type="erroneous initiation">
        <sequence resource="EMBL-CDS" id="AAO04808"/>
    </conflict>
</comment>
<reference key="1">
    <citation type="journal article" date="2003" name="Mol. Microbiol.">
        <title>Genome-based analysis of virulence genes in a non-biofilm-forming Staphylococcus epidermidis strain (ATCC 12228).</title>
        <authorList>
            <person name="Zhang Y.-Q."/>
            <person name="Ren S.-X."/>
            <person name="Li H.-L."/>
            <person name="Wang Y.-X."/>
            <person name="Fu G."/>
            <person name="Yang J."/>
            <person name="Qin Z.-Q."/>
            <person name="Miao Y.-G."/>
            <person name="Wang W.-Y."/>
            <person name="Chen R.-S."/>
            <person name="Shen Y."/>
            <person name="Chen Z."/>
            <person name="Yuan Z.-H."/>
            <person name="Zhao G.-P."/>
            <person name="Qu D."/>
            <person name="Danchin A."/>
            <person name="Wen Y.-M."/>
        </authorList>
    </citation>
    <scope>NUCLEOTIDE SEQUENCE [LARGE SCALE GENOMIC DNA]</scope>
    <source>
        <strain>ATCC 12228 / FDA PCI 1200</strain>
    </source>
</reference>
<keyword id="KW-0028">Amino-acid biosynthesis</keyword>
<keyword id="KW-0032">Aminotransferase</keyword>
<keyword id="KW-0055">Arginine biosynthesis</keyword>
<keyword id="KW-0963">Cytoplasm</keyword>
<keyword id="KW-0663">Pyridoxal phosphate</keyword>
<keyword id="KW-0808">Transferase</keyword>
<accession>Q8CSG1</accession>
<protein>
    <recommendedName>
        <fullName evidence="1">Acetylornithine aminotransferase</fullName>
        <shortName evidence="1">ACOAT</shortName>
        <ecNumber evidence="1">2.6.1.11</ecNumber>
    </recommendedName>
</protein>
<sequence>MSYLFNNYKRDNIEFVDANQNELIDKDNNVYLDFSSGIGVTNLGFNMEIYQAVYNQLNLIWHSPNLYLSSIQEEVAQKLIGQRDYLAFFCNSGTEANEAAIKLARKATGKSEIIAFKKSFHGRTYGAMSATGQKKITDQFGPVVPGFKFAIFNDFNSFKSLTSNNTAAVIIEIIQGESGVLPADPLFMKQLNEYCKQKDILIIVDEVQTGIGRTGKLYAHEHYQLSPDIITLAKGLGNGLPIGAMLGKKNLGHAFGYGSHGTTFGGNRLSLAAANQTLSIINDADLLNDVQSKGQFLIENLRKSLVNKRNVIEVRGVGLMVGIEVTNDPSQVVREAKRMGLIILTAGKNVIRLLPPLTITKKQLEKGIEILTEII</sequence>
<proteinExistence type="inferred from homology"/>
<name>ARGD_STAES</name>
<organism>
    <name type="scientific">Staphylococcus epidermidis (strain ATCC 12228 / FDA PCI 1200)</name>
    <dbReference type="NCBI Taxonomy" id="176280"/>
    <lineage>
        <taxon>Bacteria</taxon>
        <taxon>Bacillati</taxon>
        <taxon>Bacillota</taxon>
        <taxon>Bacilli</taxon>
        <taxon>Bacillales</taxon>
        <taxon>Staphylococcaceae</taxon>
        <taxon>Staphylococcus</taxon>
    </lineage>
</organism>
<feature type="chain" id="PRO_0000112793" description="Acetylornithine aminotransferase">
    <location>
        <begin position="1"/>
        <end position="375"/>
    </location>
</feature>
<feature type="binding site" evidence="1">
    <location>
        <begin position="93"/>
        <end position="94"/>
    </location>
    <ligand>
        <name>pyridoxal 5'-phosphate</name>
        <dbReference type="ChEBI" id="CHEBI:597326"/>
    </ligand>
</feature>
<feature type="binding site" evidence="1">
    <location>
        <position position="120"/>
    </location>
    <ligand>
        <name>pyridoxal 5'-phosphate</name>
        <dbReference type="ChEBI" id="CHEBI:597326"/>
    </ligand>
</feature>
<feature type="binding site" evidence="1">
    <location>
        <position position="123"/>
    </location>
    <ligand>
        <name>N(2)-acetyl-L-ornithine</name>
        <dbReference type="ChEBI" id="CHEBI:57805"/>
    </ligand>
</feature>
<feature type="binding site" evidence="1">
    <location>
        <begin position="205"/>
        <end position="208"/>
    </location>
    <ligand>
        <name>pyridoxal 5'-phosphate</name>
        <dbReference type="ChEBI" id="CHEBI:597326"/>
    </ligand>
</feature>
<feature type="binding site" evidence="1">
    <location>
        <position position="262"/>
    </location>
    <ligand>
        <name>N(2)-acetyl-L-ornithine</name>
        <dbReference type="ChEBI" id="CHEBI:57805"/>
    </ligand>
</feature>
<feature type="binding site" evidence="1">
    <location>
        <position position="263"/>
    </location>
    <ligand>
        <name>pyridoxal 5'-phosphate</name>
        <dbReference type="ChEBI" id="CHEBI:597326"/>
    </ligand>
</feature>
<feature type="modified residue" description="N6-(pyridoxal phosphate)lysine" evidence="1">
    <location>
        <position position="234"/>
    </location>
</feature>
<dbReference type="EC" id="2.6.1.11" evidence="1"/>
<dbReference type="EMBL" id="AE015929">
    <property type="protein sequence ID" value="AAO04808.1"/>
    <property type="status" value="ALT_INIT"/>
    <property type="molecule type" value="Genomic_DNA"/>
</dbReference>
<dbReference type="RefSeq" id="NP_764764.1">
    <property type="nucleotide sequence ID" value="NC_004461.1"/>
</dbReference>
<dbReference type="SMR" id="Q8CSG1"/>
<dbReference type="KEGG" id="sep:SE_1209"/>
<dbReference type="PATRIC" id="fig|176280.10.peg.1179"/>
<dbReference type="eggNOG" id="COG4992">
    <property type="taxonomic scope" value="Bacteria"/>
</dbReference>
<dbReference type="HOGENOM" id="CLU_016922_10_1_9"/>
<dbReference type="OrthoDB" id="9807885at2"/>
<dbReference type="UniPathway" id="UPA00068">
    <property type="reaction ID" value="UER00109"/>
</dbReference>
<dbReference type="Proteomes" id="UP000001411">
    <property type="component" value="Chromosome"/>
</dbReference>
<dbReference type="GO" id="GO:0005737">
    <property type="term" value="C:cytoplasm"/>
    <property type="evidence" value="ECO:0007669"/>
    <property type="project" value="UniProtKB-SubCell"/>
</dbReference>
<dbReference type="GO" id="GO:0042802">
    <property type="term" value="F:identical protein binding"/>
    <property type="evidence" value="ECO:0007669"/>
    <property type="project" value="TreeGrafter"/>
</dbReference>
<dbReference type="GO" id="GO:0003992">
    <property type="term" value="F:N2-acetyl-L-ornithine:2-oxoglutarate 5-aminotransferase activity"/>
    <property type="evidence" value="ECO:0007669"/>
    <property type="project" value="UniProtKB-UniRule"/>
</dbReference>
<dbReference type="GO" id="GO:0030170">
    <property type="term" value="F:pyridoxal phosphate binding"/>
    <property type="evidence" value="ECO:0007669"/>
    <property type="project" value="InterPro"/>
</dbReference>
<dbReference type="GO" id="GO:0006526">
    <property type="term" value="P:L-arginine biosynthetic process"/>
    <property type="evidence" value="ECO:0007669"/>
    <property type="project" value="UniProtKB-UniRule"/>
</dbReference>
<dbReference type="CDD" id="cd00610">
    <property type="entry name" value="OAT_like"/>
    <property type="match status" value="1"/>
</dbReference>
<dbReference type="FunFam" id="3.40.640.10:FF:000004">
    <property type="entry name" value="Acetylornithine aminotransferase"/>
    <property type="match status" value="1"/>
</dbReference>
<dbReference type="Gene3D" id="3.90.1150.10">
    <property type="entry name" value="Aspartate Aminotransferase, domain 1"/>
    <property type="match status" value="1"/>
</dbReference>
<dbReference type="Gene3D" id="3.40.640.10">
    <property type="entry name" value="Type I PLP-dependent aspartate aminotransferase-like (Major domain)"/>
    <property type="match status" value="1"/>
</dbReference>
<dbReference type="HAMAP" id="MF_01107">
    <property type="entry name" value="ArgD_aminotrans_3"/>
    <property type="match status" value="1"/>
</dbReference>
<dbReference type="InterPro" id="IPR004636">
    <property type="entry name" value="AcOrn/SuccOrn_fam"/>
</dbReference>
<dbReference type="InterPro" id="IPR005814">
    <property type="entry name" value="Aminotrans_3"/>
</dbReference>
<dbReference type="InterPro" id="IPR049704">
    <property type="entry name" value="Aminotrans_3_PPA_site"/>
</dbReference>
<dbReference type="InterPro" id="IPR050103">
    <property type="entry name" value="Class-III_PLP-dep_AT"/>
</dbReference>
<dbReference type="InterPro" id="IPR015424">
    <property type="entry name" value="PyrdxlP-dep_Trfase"/>
</dbReference>
<dbReference type="InterPro" id="IPR015421">
    <property type="entry name" value="PyrdxlP-dep_Trfase_major"/>
</dbReference>
<dbReference type="InterPro" id="IPR015422">
    <property type="entry name" value="PyrdxlP-dep_Trfase_small"/>
</dbReference>
<dbReference type="NCBIfam" id="TIGR00707">
    <property type="entry name" value="argD"/>
    <property type="match status" value="1"/>
</dbReference>
<dbReference type="NCBIfam" id="NF002325">
    <property type="entry name" value="PRK01278.1"/>
    <property type="match status" value="1"/>
</dbReference>
<dbReference type="NCBIfam" id="NF002797">
    <property type="entry name" value="PRK02936.1"/>
    <property type="match status" value="1"/>
</dbReference>
<dbReference type="NCBIfam" id="NF003273">
    <property type="entry name" value="PRK04260.1"/>
    <property type="match status" value="1"/>
</dbReference>
<dbReference type="PANTHER" id="PTHR11986:SF79">
    <property type="entry name" value="ACETYLORNITHINE AMINOTRANSFERASE, MITOCHONDRIAL"/>
    <property type="match status" value="1"/>
</dbReference>
<dbReference type="PANTHER" id="PTHR11986">
    <property type="entry name" value="AMINOTRANSFERASE CLASS III"/>
    <property type="match status" value="1"/>
</dbReference>
<dbReference type="Pfam" id="PF00202">
    <property type="entry name" value="Aminotran_3"/>
    <property type="match status" value="1"/>
</dbReference>
<dbReference type="PIRSF" id="PIRSF000521">
    <property type="entry name" value="Transaminase_4ab_Lys_Orn"/>
    <property type="match status" value="1"/>
</dbReference>
<dbReference type="SUPFAM" id="SSF53383">
    <property type="entry name" value="PLP-dependent transferases"/>
    <property type="match status" value="1"/>
</dbReference>
<dbReference type="PROSITE" id="PS00600">
    <property type="entry name" value="AA_TRANSFER_CLASS_3"/>
    <property type="match status" value="1"/>
</dbReference>